<reference key="1">
    <citation type="journal article" date="2001" name="Nature">
        <title>Genome sequence of enterohaemorrhagic Escherichia coli O157:H7.</title>
        <authorList>
            <person name="Perna N.T."/>
            <person name="Plunkett G. III"/>
            <person name="Burland V."/>
            <person name="Mau B."/>
            <person name="Glasner J.D."/>
            <person name="Rose D.J."/>
            <person name="Mayhew G.F."/>
            <person name="Evans P.S."/>
            <person name="Gregor J."/>
            <person name="Kirkpatrick H.A."/>
            <person name="Posfai G."/>
            <person name="Hackett J."/>
            <person name="Klink S."/>
            <person name="Boutin A."/>
            <person name="Shao Y."/>
            <person name="Miller L."/>
            <person name="Grotbeck E.J."/>
            <person name="Davis N.W."/>
            <person name="Lim A."/>
            <person name="Dimalanta E.T."/>
            <person name="Potamousis K."/>
            <person name="Apodaca J."/>
            <person name="Anantharaman T.S."/>
            <person name="Lin J."/>
            <person name="Yen G."/>
            <person name="Schwartz D.C."/>
            <person name="Welch R.A."/>
            <person name="Blattner F.R."/>
        </authorList>
    </citation>
    <scope>NUCLEOTIDE SEQUENCE [LARGE SCALE GENOMIC DNA]</scope>
    <source>
        <strain>O157:H7 / EDL933 / ATCC 700927 / EHEC</strain>
    </source>
</reference>
<reference key="2">
    <citation type="journal article" date="2001" name="DNA Res.">
        <title>Complete genome sequence of enterohemorrhagic Escherichia coli O157:H7 and genomic comparison with a laboratory strain K-12.</title>
        <authorList>
            <person name="Hayashi T."/>
            <person name="Makino K."/>
            <person name="Ohnishi M."/>
            <person name="Kurokawa K."/>
            <person name="Ishii K."/>
            <person name="Yokoyama K."/>
            <person name="Han C.-G."/>
            <person name="Ohtsubo E."/>
            <person name="Nakayama K."/>
            <person name="Murata T."/>
            <person name="Tanaka M."/>
            <person name="Tobe T."/>
            <person name="Iida T."/>
            <person name="Takami H."/>
            <person name="Honda T."/>
            <person name="Sasakawa C."/>
            <person name="Ogasawara N."/>
            <person name="Yasunaga T."/>
            <person name="Kuhara S."/>
            <person name="Shiba T."/>
            <person name="Hattori M."/>
            <person name="Shinagawa H."/>
        </authorList>
    </citation>
    <scope>NUCLEOTIDE SEQUENCE [LARGE SCALE GENOMIC DNA]</scope>
    <source>
        <strain>O157:H7 / Sakai / RIMD 0509952 / EHEC</strain>
    </source>
</reference>
<gene>
    <name type="primary">manY</name>
    <name type="ordered locus">Z2861</name>
    <name type="ordered locus">ECs2528</name>
</gene>
<comment type="function">
    <text evidence="1">The phosphoenolpyruvate-dependent sugar phosphotransferase system (sugar PTS), a major carbohydrate active transport system, catalyzes the phosphorylation of incoming sugar substrates concomitantly with their translocation across the cell membrane. The enzyme II ManXYZ PTS system is involved in mannose transport.</text>
</comment>
<comment type="subunit">
    <text evidence="1">Homotrimer of protomers that are composed of two subunits, IIC and IID.</text>
</comment>
<comment type="subcellular location">
    <subcellularLocation>
        <location evidence="2">Cell inner membrane</location>
        <topology evidence="2">Multi-pass membrane protein</topology>
    </subcellularLocation>
</comment>
<comment type="domain">
    <text evidence="2">The PTS EIIC type-4 domain forms the PTS system translocation channel and contains the specific substrate-binding site.</text>
</comment>
<organism>
    <name type="scientific">Escherichia coli O157:H7</name>
    <dbReference type="NCBI Taxonomy" id="83334"/>
    <lineage>
        <taxon>Bacteria</taxon>
        <taxon>Pseudomonadati</taxon>
        <taxon>Pseudomonadota</taxon>
        <taxon>Gammaproteobacteria</taxon>
        <taxon>Enterobacterales</taxon>
        <taxon>Enterobacteriaceae</taxon>
        <taxon>Escherichia</taxon>
    </lineage>
</organism>
<sequence>MEITTLQIVLVFIVACIAGMGSILDEFQFHRPLIACTLVGIVLGDMKTGIIIGGTLEMIALGWMNIGAAVAPDAALASIISTILVIAGHQSIGAGIALAIPLAAAGQVLTIIVRTITVAFQHAADKAADNGNLTAISWIHVSSLFLQAMRVAIPAVIVALSVGTSEVQNMLNAIPEVVTNGLNIAGGMIVVVGYAMVINMMRAGYLMPFFYLGFVTAAFTNFNLVALGVIGTVMAVLYIQLSPKYNRVAGAPAQAAGNNDLDNELD</sequence>
<proteinExistence type="inferred from homology"/>
<name>PTNC_ECO57</name>
<evidence type="ECO:0000250" key="1">
    <source>
        <dbReference type="UniProtKB" id="P69801"/>
    </source>
</evidence>
<evidence type="ECO:0000255" key="2">
    <source>
        <dbReference type="PROSITE-ProRule" id="PRU00429"/>
    </source>
</evidence>
<accession>P69803</accession>
<accession>P08187</accession>
<accession>Q47351</accession>
<feature type="chain" id="PRO_0000186648" description="PTS system mannose-specific EIIC component">
    <location>
        <begin position="1"/>
        <end position="266"/>
    </location>
</feature>
<feature type="topological domain" description="Periplasmic" evidence="1">
    <location>
        <begin position="1"/>
        <end position="4"/>
    </location>
</feature>
<feature type="intramembrane region" evidence="1">
    <location>
        <begin position="5"/>
        <end position="43"/>
    </location>
</feature>
<feature type="topological domain" description="Periplasmic" evidence="1">
    <location>
        <begin position="44"/>
        <end position="46"/>
    </location>
</feature>
<feature type="intramembrane region" evidence="1">
    <location>
        <begin position="47"/>
        <end position="86"/>
    </location>
</feature>
<feature type="topological domain" description="Periplasmic" evidence="1">
    <location>
        <begin position="87"/>
        <end position="90"/>
    </location>
</feature>
<feature type="transmembrane region" evidence="1">
    <location>
        <begin position="91"/>
        <end position="124"/>
    </location>
</feature>
<feature type="topological domain" description="Cytoplasmic" evidence="1">
    <location>
        <begin position="125"/>
        <end position="132"/>
    </location>
</feature>
<feature type="transmembrane region" evidence="1">
    <location>
        <begin position="133"/>
        <end position="160"/>
    </location>
</feature>
<feature type="topological domain" description="Periplasmic" evidence="1">
    <location>
        <begin position="161"/>
        <end position="176"/>
    </location>
</feature>
<feature type="transmembrane region" evidence="1">
    <location>
        <begin position="177"/>
        <end position="200"/>
    </location>
</feature>
<feature type="topological domain" description="Cytoplasmic" evidence="1">
    <location>
        <begin position="201"/>
        <end position="207"/>
    </location>
</feature>
<feature type="transmembrane region" evidence="1">
    <location>
        <begin position="208"/>
        <end position="218"/>
    </location>
</feature>
<feature type="topological domain" description="Periplasmic" evidence="1">
    <location>
        <begin position="219"/>
        <end position="224"/>
    </location>
</feature>
<feature type="transmembrane region" evidence="1">
    <location>
        <begin position="225"/>
        <end position="242"/>
    </location>
</feature>
<feature type="topological domain" description="Cytoplasmic" evidence="1">
    <location>
        <begin position="243"/>
        <end position="266"/>
    </location>
</feature>
<feature type="domain" description="PTS EIIC type-4" evidence="2">
    <location>
        <begin position="1"/>
        <end position="237"/>
    </location>
</feature>
<feature type="modified residue" description="N-formylmethionine" evidence="1">
    <location>
        <position position="1"/>
    </location>
</feature>
<protein>
    <recommendedName>
        <fullName evidence="1">PTS system mannose-specific EIIC component</fullName>
    </recommendedName>
    <alternativeName>
        <fullName evidence="1">EII-P-Man</fullName>
    </alternativeName>
    <alternativeName>
        <fullName evidence="1">EIIC-Man</fullName>
    </alternativeName>
    <alternativeName>
        <fullName evidence="1">Mannose permease IIC component</fullName>
    </alternativeName>
</protein>
<keyword id="KW-0997">Cell inner membrane</keyword>
<keyword id="KW-1003">Cell membrane</keyword>
<keyword id="KW-0291">Formylation</keyword>
<keyword id="KW-0472">Membrane</keyword>
<keyword id="KW-0598">Phosphotransferase system</keyword>
<keyword id="KW-1185">Reference proteome</keyword>
<keyword id="KW-0762">Sugar transport</keyword>
<keyword id="KW-0812">Transmembrane</keyword>
<keyword id="KW-1133">Transmembrane helix</keyword>
<keyword id="KW-0813">Transport</keyword>
<dbReference type="EMBL" id="AE005174">
    <property type="protein sequence ID" value="AAG56807.1"/>
    <property type="molecule type" value="Genomic_DNA"/>
</dbReference>
<dbReference type="EMBL" id="BA000007">
    <property type="protein sequence ID" value="BAB35951.1"/>
    <property type="molecule type" value="Genomic_DNA"/>
</dbReference>
<dbReference type="PIR" id="C85793">
    <property type="entry name" value="C85793"/>
</dbReference>
<dbReference type="PIR" id="H90944">
    <property type="entry name" value="H90944"/>
</dbReference>
<dbReference type="RefSeq" id="NP_310555.1">
    <property type="nucleotide sequence ID" value="NC_002695.1"/>
</dbReference>
<dbReference type="RefSeq" id="WP_000406926.1">
    <property type="nucleotide sequence ID" value="NZ_VOAI01000010.1"/>
</dbReference>
<dbReference type="SMR" id="P69803"/>
<dbReference type="STRING" id="155864.Z2861"/>
<dbReference type="GeneID" id="912707"/>
<dbReference type="GeneID" id="93776067"/>
<dbReference type="KEGG" id="ece:Z2861"/>
<dbReference type="KEGG" id="ecs:ECs_2528"/>
<dbReference type="PATRIC" id="fig|386585.9.peg.2648"/>
<dbReference type="eggNOG" id="COG3715">
    <property type="taxonomic scope" value="Bacteria"/>
</dbReference>
<dbReference type="HOGENOM" id="CLU_069101_0_0_6"/>
<dbReference type="OMA" id="QWIAVCL"/>
<dbReference type="Proteomes" id="UP000000558">
    <property type="component" value="Chromosome"/>
</dbReference>
<dbReference type="Proteomes" id="UP000002519">
    <property type="component" value="Chromosome"/>
</dbReference>
<dbReference type="GO" id="GO:0005886">
    <property type="term" value="C:plasma membrane"/>
    <property type="evidence" value="ECO:0007669"/>
    <property type="project" value="UniProtKB-SubCell"/>
</dbReference>
<dbReference type="GO" id="GO:0009401">
    <property type="term" value="P:phosphoenolpyruvate-dependent sugar phosphotransferase system"/>
    <property type="evidence" value="ECO:0007669"/>
    <property type="project" value="UniProtKB-KW"/>
</dbReference>
<dbReference type="InterPro" id="IPR050303">
    <property type="entry name" value="GatZ_KbaZ_carbometab"/>
</dbReference>
<dbReference type="InterPro" id="IPR004700">
    <property type="entry name" value="PTS_IIC_man"/>
</dbReference>
<dbReference type="NCBIfam" id="TIGR00822">
    <property type="entry name" value="EII-Sor"/>
    <property type="match status" value="1"/>
</dbReference>
<dbReference type="NCBIfam" id="NF011647">
    <property type="entry name" value="PRK15065.1"/>
    <property type="match status" value="1"/>
</dbReference>
<dbReference type="PANTHER" id="PTHR32502">
    <property type="entry name" value="N-ACETYLGALACTOSAMINE PERMEASE II COMPONENT-RELATED"/>
    <property type="match status" value="1"/>
</dbReference>
<dbReference type="PANTHER" id="PTHR32502:SF4">
    <property type="entry name" value="PTS SYSTEM MANNOSE-SPECIFIC EIIC COMPONENT"/>
    <property type="match status" value="1"/>
</dbReference>
<dbReference type="Pfam" id="PF03609">
    <property type="entry name" value="EII-Sor"/>
    <property type="match status" value="1"/>
</dbReference>
<dbReference type="PROSITE" id="PS51106">
    <property type="entry name" value="PTS_EIIC_TYPE_4"/>
    <property type="match status" value="1"/>
</dbReference>